<accession>P53010</accession>
<accession>D6VU51</accession>
<feature type="chain" id="PRO_0000058222" description="PAN2-PAN3 deadenylation complex catalytic subunit PAN2">
    <location>
        <begin position="1"/>
        <end position="1115"/>
    </location>
</feature>
<feature type="repeat" description="WD 1" evidence="2">
    <location>
        <begin position="27"/>
        <end position="66"/>
    </location>
</feature>
<feature type="repeat" description="WD 2" evidence="2">
    <location>
        <begin position="112"/>
        <end position="153"/>
    </location>
</feature>
<feature type="repeat" description="WD 3" evidence="2">
    <location>
        <begin position="155"/>
        <end position="194"/>
    </location>
</feature>
<feature type="repeat" description="WD 4" evidence="2">
    <location>
        <begin position="197"/>
        <end position="236"/>
    </location>
</feature>
<feature type="repeat" description="WD 5" evidence="2">
    <location>
        <begin position="295"/>
        <end position="334"/>
    </location>
</feature>
<feature type="domain" description="USP" evidence="2 19">
    <location>
        <begin position="474"/>
        <end position="855"/>
    </location>
</feature>
<feature type="domain" description="Exonuclease" evidence="2">
    <location>
        <begin position="907"/>
        <end position="1079"/>
    </location>
</feature>
<feature type="region of interest" description="Linker" evidence="2 19">
    <location>
        <begin position="337"/>
        <end position="473"/>
    </location>
</feature>
<feature type="binding site" evidence="14 20">
    <location>
        <position position="660"/>
    </location>
    <ligand>
        <name>Zn(2+)</name>
        <dbReference type="ChEBI" id="CHEBI:29105"/>
    </ligand>
</feature>
<feature type="binding site" evidence="14 20">
    <location>
        <position position="662"/>
    </location>
    <ligand>
        <name>Zn(2+)</name>
        <dbReference type="ChEBI" id="CHEBI:29105"/>
    </ligand>
</feature>
<feature type="binding site" evidence="14 20">
    <location>
        <position position="713"/>
    </location>
    <ligand>
        <name>Zn(2+)</name>
        <dbReference type="ChEBI" id="CHEBI:29105"/>
    </ligand>
</feature>
<feature type="binding site" evidence="14 20">
    <location>
        <position position="716"/>
    </location>
    <ligand>
        <name>Zn(2+)</name>
        <dbReference type="ChEBI" id="CHEBI:29105"/>
    </ligand>
</feature>
<feature type="binding site" evidence="1 2 19">
    <location>
        <position position="910"/>
    </location>
    <ligand>
        <name>a divalent metal cation</name>
        <dbReference type="ChEBI" id="CHEBI:60240"/>
        <note>catalytic</note>
    </ligand>
</feature>
<feature type="binding site" evidence="1 2 19">
    <location>
        <position position="912"/>
    </location>
    <ligand>
        <name>a divalent metal cation</name>
        <dbReference type="ChEBI" id="CHEBI:60240"/>
        <note>catalytic</note>
    </ligand>
</feature>
<feature type="binding site" evidence="1 2">
    <location>
        <position position="1020"/>
    </location>
    <ligand>
        <name>a divalent metal cation</name>
        <dbReference type="ChEBI" id="CHEBI:60240"/>
        <note>catalytic</note>
    </ligand>
</feature>
<feature type="binding site" evidence="1 2 19">
    <location>
        <position position="1071"/>
    </location>
    <ligand>
        <name>a divalent metal cation</name>
        <dbReference type="ChEBI" id="CHEBI:60240"/>
        <note>catalytic</note>
    </ligand>
</feature>
<feature type="mutagenesis site" description="Abolishes nuclease activity." evidence="13">
    <original>E</original>
    <variation>A</variation>
    <location>
        <position position="912"/>
    </location>
</feature>
<feature type="mutagenesis site" description="Abolishes nuclease activity." evidence="14">
    <original>D</original>
    <variation>A</variation>
    <location>
        <position position="1020"/>
    </location>
</feature>
<feature type="turn" evidence="22">
    <location>
        <begin position="460"/>
        <end position="465"/>
    </location>
</feature>
<feature type="strand" evidence="26">
    <location>
        <begin position="470"/>
        <end position="474"/>
    </location>
</feature>
<feature type="helix" evidence="21">
    <location>
        <begin position="477"/>
        <end position="479"/>
    </location>
</feature>
<feature type="helix" evidence="21">
    <location>
        <begin position="488"/>
        <end position="490"/>
    </location>
</feature>
<feature type="helix" evidence="21">
    <location>
        <begin position="497"/>
        <end position="499"/>
    </location>
</feature>
<feature type="strand" evidence="21">
    <location>
        <begin position="502"/>
        <end position="504"/>
    </location>
</feature>
<feature type="turn" evidence="21">
    <location>
        <begin position="512"/>
        <end position="515"/>
    </location>
</feature>
<feature type="helix" evidence="21">
    <location>
        <begin position="516"/>
        <end position="524"/>
    </location>
</feature>
<feature type="helix" evidence="21">
    <location>
        <begin position="527"/>
        <end position="536"/>
    </location>
</feature>
<feature type="helix" evidence="21">
    <location>
        <begin position="546"/>
        <end position="559"/>
    </location>
</feature>
<feature type="strand" evidence="21">
    <location>
        <begin position="560"/>
        <end position="562"/>
    </location>
</feature>
<feature type="helix" evidence="21">
    <location>
        <begin position="568"/>
        <end position="576"/>
    </location>
</feature>
<feature type="helix" evidence="23">
    <location>
        <begin position="587"/>
        <end position="589"/>
    </location>
</feature>
<feature type="helix" evidence="26">
    <location>
        <begin position="590"/>
        <end position="595"/>
    </location>
</feature>
<feature type="turn" evidence="26">
    <location>
        <begin position="598"/>
        <end position="600"/>
    </location>
</feature>
<feature type="turn" evidence="22">
    <location>
        <begin position="603"/>
        <end position="605"/>
    </location>
</feature>
<feature type="strand" evidence="22">
    <location>
        <begin position="610"/>
        <end position="613"/>
    </location>
</feature>
<feature type="helix" evidence="21">
    <location>
        <begin position="618"/>
        <end position="636"/>
    </location>
</feature>
<feature type="strand" evidence="21">
    <location>
        <begin position="637"/>
        <end position="639"/>
    </location>
</feature>
<feature type="helix" evidence="21">
    <location>
        <begin position="643"/>
        <end position="648"/>
    </location>
</feature>
<feature type="strand" evidence="21">
    <location>
        <begin position="650"/>
        <end position="657"/>
    </location>
</feature>
<feature type="strand" evidence="21">
    <location>
        <begin position="659"/>
        <end position="661"/>
    </location>
</feature>
<feature type="strand" evidence="21">
    <location>
        <begin position="666"/>
        <end position="675"/>
    </location>
</feature>
<feature type="turn" evidence="27">
    <location>
        <begin position="684"/>
        <end position="686"/>
    </location>
</feature>
<feature type="helix" evidence="21">
    <location>
        <begin position="696"/>
        <end position="703"/>
    </location>
</feature>
<feature type="strand" evidence="21">
    <location>
        <begin position="704"/>
        <end position="712"/>
    </location>
</feature>
<feature type="turn" evidence="21">
    <location>
        <begin position="714"/>
        <end position="716"/>
    </location>
</feature>
<feature type="strand" evidence="21">
    <location>
        <begin position="719"/>
        <end position="728"/>
    </location>
</feature>
<feature type="strand" evidence="21">
    <location>
        <begin position="733"/>
        <end position="739"/>
    </location>
</feature>
<feature type="helix" evidence="21">
    <location>
        <begin position="743"/>
        <end position="751"/>
    </location>
</feature>
<feature type="strand" evidence="26">
    <location>
        <begin position="752"/>
        <end position="754"/>
    </location>
</feature>
<feature type="strand" evidence="21">
    <location>
        <begin position="758"/>
        <end position="765"/>
    </location>
</feature>
<feature type="strand" evidence="21">
    <location>
        <begin position="768"/>
        <end position="774"/>
    </location>
</feature>
<feature type="helix" evidence="21">
    <location>
        <begin position="775"/>
        <end position="777"/>
    </location>
</feature>
<feature type="strand" evidence="21">
    <location>
        <begin position="782"/>
        <end position="797"/>
    </location>
</feature>
<feature type="strand" evidence="21">
    <location>
        <begin position="803"/>
        <end position="813"/>
    </location>
</feature>
<feature type="turn" evidence="21">
    <location>
        <begin position="814"/>
        <end position="817"/>
    </location>
</feature>
<feature type="strand" evidence="21">
    <location>
        <begin position="818"/>
        <end position="825"/>
    </location>
</feature>
<feature type="strand" evidence="21">
    <location>
        <begin position="828"/>
        <end position="832"/>
    </location>
</feature>
<feature type="helix" evidence="21">
    <location>
        <begin position="834"/>
        <end position="838"/>
    </location>
</feature>
<feature type="strand" evidence="21">
    <location>
        <begin position="845"/>
        <end position="854"/>
    </location>
</feature>
<feature type="helix" evidence="21">
    <location>
        <begin position="857"/>
        <end position="859"/>
    </location>
</feature>
<feature type="helix" evidence="23">
    <location>
        <begin position="865"/>
        <end position="867"/>
    </location>
</feature>
<feature type="helix" evidence="26">
    <location>
        <begin position="873"/>
        <end position="875"/>
    </location>
</feature>
<feature type="helix" evidence="27">
    <location>
        <begin position="897"/>
        <end position="899"/>
    </location>
</feature>
<feature type="strand" evidence="26">
    <location>
        <begin position="906"/>
        <end position="915"/>
    </location>
</feature>
<feature type="strand" evidence="26">
    <location>
        <begin position="937"/>
        <end position="945"/>
    </location>
</feature>
<feature type="strand" evidence="26">
    <location>
        <begin position="948"/>
        <end position="952"/>
    </location>
</feature>
<feature type="strand" evidence="26">
    <location>
        <begin position="956"/>
        <end position="962"/>
    </location>
</feature>
<feature type="helix" evidence="23">
    <location>
        <begin position="973"/>
        <end position="976"/>
    </location>
</feature>
<feature type="strand" evidence="26">
    <location>
        <begin position="983"/>
        <end position="986"/>
    </location>
</feature>
<feature type="strand" evidence="26">
    <location>
        <begin position="988"/>
        <end position="990"/>
    </location>
</feature>
<feature type="helix" evidence="26">
    <location>
        <begin position="995"/>
        <end position="1008"/>
    </location>
</feature>
<feature type="strand" evidence="26">
    <location>
        <begin position="1011"/>
        <end position="1016"/>
    </location>
</feature>
<feature type="helix" evidence="26">
    <location>
        <begin position="1017"/>
        <end position="1023"/>
    </location>
</feature>
<feature type="helix" evidence="26">
    <location>
        <begin position="1030"/>
        <end position="1032"/>
    </location>
</feature>
<feature type="strand" evidence="26">
    <location>
        <begin position="1033"/>
        <end position="1035"/>
    </location>
</feature>
<feature type="helix" evidence="26">
    <location>
        <begin position="1036"/>
        <end position="1039"/>
    </location>
</feature>
<feature type="strand" evidence="23">
    <location>
        <begin position="1043"/>
        <end position="1045"/>
    </location>
</feature>
<feature type="helix" evidence="26">
    <location>
        <begin position="1050"/>
        <end position="1055"/>
    </location>
</feature>
<feature type="strand" evidence="24">
    <location>
        <begin position="1056"/>
        <end position="1058"/>
    </location>
</feature>
<feature type="strand" evidence="24">
    <location>
        <begin position="1063"/>
        <end position="1065"/>
    </location>
</feature>
<feature type="helix" evidence="26">
    <location>
        <begin position="1068"/>
        <end position="1087"/>
    </location>
</feature>
<feature type="turn" evidence="25">
    <location>
        <begin position="1088"/>
        <end position="1090"/>
    </location>
</feature>
<feature type="helix" evidence="26">
    <location>
        <begin position="1091"/>
        <end position="1101"/>
    </location>
</feature>
<feature type="turn" evidence="26">
    <location>
        <begin position="1102"/>
        <end position="1107"/>
    </location>
</feature>
<keyword id="KW-0002">3D-structure</keyword>
<keyword id="KW-0963">Cytoplasm</keyword>
<keyword id="KW-0903">Direct protein sequencing</keyword>
<keyword id="KW-0269">Exonuclease</keyword>
<keyword id="KW-0378">Hydrolase</keyword>
<keyword id="KW-0479">Metal-binding</keyword>
<keyword id="KW-0507">mRNA processing</keyword>
<keyword id="KW-0540">Nuclease</keyword>
<keyword id="KW-1185">Reference proteome</keyword>
<keyword id="KW-0677">Repeat</keyword>
<keyword id="KW-0853">WD repeat</keyword>
<reference key="1">
    <citation type="journal article" date="1996" name="J. Biol. Chem.">
        <title>The yeast Pan2 protein is required for poly(A)-binding protein-stimulated poly(A)-nuclease activity.</title>
        <authorList>
            <person name="Boeck R."/>
            <person name="Tarun S.Z. Jr."/>
            <person name="Rieger M."/>
            <person name="Deardorff J.A."/>
            <person name="Mueller-Auer S."/>
            <person name="Sachs A.B."/>
        </authorList>
    </citation>
    <scope>NUCLEOTIDE SEQUENCE [GENOMIC DNA]</scope>
    <scope>PARTIAL PROTEIN SEQUENCE</scope>
    <scope>FUNCTION</scope>
</reference>
<reference key="2">
    <citation type="journal article" date="1997" name="Yeast">
        <title>Sequence analysis of 203 kilobases from Saccharomyces cerevisiae chromosome VII.</title>
        <authorList>
            <person name="Rieger M."/>
            <person name="Brueckner M."/>
            <person name="Schaefer M."/>
            <person name="Mueller-Auer S."/>
        </authorList>
    </citation>
    <scope>NUCLEOTIDE SEQUENCE [GENOMIC DNA]</scope>
    <source>
        <strain>ATCC 204508 / S288c</strain>
    </source>
</reference>
<reference key="3">
    <citation type="journal article" date="1997" name="Nature">
        <title>The nucleotide sequence of Saccharomyces cerevisiae chromosome VII.</title>
        <authorList>
            <person name="Tettelin H."/>
            <person name="Agostoni-Carbone M.L."/>
            <person name="Albermann K."/>
            <person name="Albers M."/>
            <person name="Arroyo J."/>
            <person name="Backes U."/>
            <person name="Barreiros T."/>
            <person name="Bertani I."/>
            <person name="Bjourson A.J."/>
            <person name="Brueckner M."/>
            <person name="Bruschi C.V."/>
            <person name="Carignani G."/>
            <person name="Castagnoli L."/>
            <person name="Cerdan E."/>
            <person name="Clemente M.L."/>
            <person name="Coblenz A."/>
            <person name="Coglievina M."/>
            <person name="Coissac E."/>
            <person name="Defoor E."/>
            <person name="Del Bino S."/>
            <person name="Delius H."/>
            <person name="Delneri D."/>
            <person name="de Wergifosse P."/>
            <person name="Dujon B."/>
            <person name="Durand P."/>
            <person name="Entian K.-D."/>
            <person name="Eraso P."/>
            <person name="Escribano V."/>
            <person name="Fabiani L."/>
            <person name="Fartmann B."/>
            <person name="Feroli F."/>
            <person name="Feuermann M."/>
            <person name="Frontali L."/>
            <person name="Garcia-Gonzalez M."/>
            <person name="Garcia-Saez M.I."/>
            <person name="Goffeau A."/>
            <person name="Guerreiro P."/>
            <person name="Hani J."/>
            <person name="Hansen M."/>
            <person name="Hebling U."/>
            <person name="Hernandez K."/>
            <person name="Heumann K."/>
            <person name="Hilger F."/>
            <person name="Hofmann B."/>
            <person name="Indge K.J."/>
            <person name="James C.M."/>
            <person name="Klima R."/>
            <person name="Koetter P."/>
            <person name="Kramer B."/>
            <person name="Kramer W."/>
            <person name="Lauquin G."/>
            <person name="Leuther H."/>
            <person name="Louis E.J."/>
            <person name="Maillier E."/>
            <person name="Marconi A."/>
            <person name="Martegani E."/>
            <person name="Mazon M.J."/>
            <person name="Mazzoni C."/>
            <person name="McReynolds A.D.K."/>
            <person name="Melchioretto P."/>
            <person name="Mewes H.-W."/>
            <person name="Minenkova O."/>
            <person name="Mueller-Auer S."/>
            <person name="Nawrocki A."/>
            <person name="Netter P."/>
            <person name="Neu R."/>
            <person name="Nombela C."/>
            <person name="Oliver S.G."/>
            <person name="Panzeri L."/>
            <person name="Paoluzi S."/>
            <person name="Plevani P."/>
            <person name="Portetelle D."/>
            <person name="Portillo F."/>
            <person name="Potier S."/>
            <person name="Purnelle B."/>
            <person name="Rieger M."/>
            <person name="Riles L."/>
            <person name="Rinaldi T."/>
            <person name="Robben J."/>
            <person name="Rodrigues-Pousada C."/>
            <person name="Rodriguez-Belmonte E."/>
            <person name="Rodriguez-Torres A.M."/>
            <person name="Rose M."/>
            <person name="Ruzzi M."/>
            <person name="Saliola M."/>
            <person name="Sanchez-Perez M."/>
            <person name="Schaefer B."/>
            <person name="Schaefer M."/>
            <person name="Scharfe M."/>
            <person name="Schmidheini T."/>
            <person name="Schreer A."/>
            <person name="Skala J."/>
            <person name="Souciet J.-L."/>
            <person name="Steensma H.Y."/>
            <person name="Talla E."/>
            <person name="Thierry A."/>
            <person name="Vandenbol M."/>
            <person name="van der Aart Q.J.M."/>
            <person name="Van Dyck L."/>
            <person name="Vanoni M."/>
            <person name="Verhasselt P."/>
            <person name="Voet M."/>
            <person name="Volckaert G."/>
            <person name="Wambutt R."/>
            <person name="Watson M.D."/>
            <person name="Weber N."/>
            <person name="Wedler E."/>
            <person name="Wedler H."/>
            <person name="Wipfli P."/>
            <person name="Wolf K."/>
            <person name="Wright L.F."/>
            <person name="Zaccaria P."/>
            <person name="Zimmermann M."/>
            <person name="Zollner A."/>
            <person name="Kleine K."/>
        </authorList>
    </citation>
    <scope>NUCLEOTIDE SEQUENCE [LARGE SCALE GENOMIC DNA]</scope>
    <source>
        <strain>ATCC 204508 / S288c</strain>
    </source>
</reference>
<reference key="4">
    <citation type="journal article" date="2014" name="G3 (Bethesda)">
        <title>The reference genome sequence of Saccharomyces cerevisiae: Then and now.</title>
        <authorList>
            <person name="Engel S.R."/>
            <person name="Dietrich F.S."/>
            <person name="Fisk D.G."/>
            <person name="Binkley G."/>
            <person name="Balakrishnan R."/>
            <person name="Costanzo M.C."/>
            <person name="Dwight S.S."/>
            <person name="Hitz B.C."/>
            <person name="Karra K."/>
            <person name="Nash R.S."/>
            <person name="Weng S."/>
            <person name="Wong E.D."/>
            <person name="Lloyd P."/>
            <person name="Skrzypek M.S."/>
            <person name="Miyasato S.R."/>
            <person name="Simison M."/>
            <person name="Cherry J.M."/>
        </authorList>
    </citation>
    <scope>GENOME REANNOTATION</scope>
    <source>
        <strain>ATCC 204508 / S288c</strain>
    </source>
</reference>
<reference key="5">
    <citation type="journal article" date="1992" name="Cell">
        <title>Translation initiation requires the PAB-dependent poly(A) ribonuclease in yeast.</title>
        <authorList>
            <person name="Sachs A.B."/>
            <person name="Deardorff J.A."/>
        </authorList>
    </citation>
    <scope>PROTEIN SEQUENCE OF 489-504</scope>
</reference>
<reference key="6">
    <citation type="journal article" date="1992" name="Genes Dev.">
        <title>3'-UTR-dependent deadenylation by the yeast poly(A) nuclease.</title>
        <authorList>
            <person name="Lowell J.E."/>
            <person name="Rudner D.Z."/>
            <person name="Sachs A.B."/>
        </authorList>
    </citation>
    <scope>FUNCTION</scope>
    <scope>CATALYTIC ACTIVITY</scope>
</reference>
<reference key="7">
    <citation type="journal article" date="1996" name="Mol. Cell. Biol.">
        <title>PAN3 encodes a subunit of the Pab1p-dependent poly(A) nuclease in Saccharomyces cerevisiae.</title>
        <authorList>
            <person name="Brown C.E."/>
            <person name="Tarun S.Z. Jr."/>
            <person name="Boeck R."/>
            <person name="Sachs A.B."/>
        </authorList>
    </citation>
    <scope>FUNCTION</scope>
    <scope>INTERACTION WITH PAN3</scope>
    <scope>ACTIVITY REGULATION</scope>
</reference>
<reference key="8">
    <citation type="journal article" date="1998" name="Mol. Cell. Biol.">
        <title>Poly(A) tail length control in Saccharomyces cerevisiae occurs by message-specific deadenylation.</title>
        <authorList>
            <person name="Brown C.E."/>
            <person name="Sachs A.B."/>
        </authorList>
    </citation>
    <scope>FUNCTION</scope>
</reference>
<reference key="9">
    <citation type="journal article" date="2001" name="Cell">
        <title>The transcription factor associated Ccr4 and Caf1 proteins are components of the major cytoplasmic mRNA deadenylase in Saccharomyces cerevisiae.</title>
        <authorList>
            <person name="Tucker M."/>
            <person name="Valencia-Sanchez M.A."/>
            <person name="Staples R.R."/>
            <person name="Chen J."/>
            <person name="Denis C.L."/>
            <person name="Parker R."/>
        </authorList>
    </citation>
    <scope>FUNCTION</scope>
</reference>
<reference key="10">
    <citation type="journal article" date="2002" name="J. Biol. Chem.">
        <title>Posttranscriptional regulation of the RAD5 DNA repair gene by the Dun1 kinase and the Pan2-Pan3 poly(A)-nuclease complex contributes to survival of replication blocks.</title>
        <authorList>
            <person name="Hammet A."/>
            <person name="Pike B.L."/>
            <person name="Heierhorst J."/>
        </authorList>
    </citation>
    <scope>FUNCTION</scope>
</reference>
<reference key="11">
    <citation type="journal article" date="2003" name="Nature">
        <title>Global analysis of protein localization in budding yeast.</title>
        <authorList>
            <person name="Huh W.-K."/>
            <person name="Falvo J.V."/>
            <person name="Gerke L.C."/>
            <person name="Carroll A.S."/>
            <person name="Howson R.W."/>
            <person name="Weissman J.S."/>
            <person name="O'Shea E.K."/>
        </authorList>
    </citation>
    <scope>SUBCELLULAR LOCATION [LARGE SCALE ANALYSIS]</scope>
</reference>
<reference key="12">
    <citation type="journal article" date="2003" name="Nature">
        <title>Global analysis of protein expression in yeast.</title>
        <authorList>
            <person name="Ghaemmaghami S."/>
            <person name="Huh W.-K."/>
            <person name="Bower K."/>
            <person name="Howson R.W."/>
            <person name="Belle A."/>
            <person name="Dephoure N."/>
            <person name="O'Shea E.K."/>
            <person name="Weissman J.S."/>
        </authorList>
    </citation>
    <scope>LEVEL OF PROTEIN EXPRESSION [LARGE SCALE ANALYSIS]</scope>
</reference>
<reference key="13">
    <citation type="journal article" date="2004" name="Mol. Cell. Biol.">
        <title>Identification of factors regulating poly(A) tail synthesis and maturation.</title>
        <authorList>
            <person name="Mangus D.A."/>
            <person name="Smith M.M."/>
            <person name="McSweeney J.M."/>
            <person name="Jacobson A."/>
        </authorList>
    </citation>
    <scope>ACTIVITY REGULATION</scope>
</reference>
<reference key="14">
    <citation type="journal article" date="2004" name="Mol. Cell. Biol.">
        <title>Positive and negative regulation of poly(A) nuclease.</title>
        <authorList>
            <person name="Mangus D.A."/>
            <person name="Evans M.C."/>
            <person name="Agrin N.S."/>
            <person name="Smith M.M."/>
            <person name="Gongidi P."/>
            <person name="Jacobson A."/>
        </authorList>
    </citation>
    <scope>INTERACTION WITH PAN3</scope>
</reference>
<reference key="15">
    <citation type="journal article" date="2005" name="Genes Dev.">
        <title>Yeast poly(A)-binding protein, Pab1, and PAN, a poly(A) nuclease complex recruited by Pab1, connect mRNA biogenesis to export.</title>
        <authorList>
            <person name="Dunn E.F."/>
            <person name="Hammell C.M."/>
            <person name="Hodge C.A."/>
            <person name="Cole C.N."/>
        </authorList>
    </citation>
    <scope>FUNCTION</scope>
</reference>
<reference key="16">
    <citation type="journal article" date="2005" name="J. Biol. Chem.">
        <title>Yeast mRNA poly(A) tail length control can be reconstituted in vitro in the absence of Pab1p-dependent poly(A) nuclease activity.</title>
        <authorList>
            <person name="Dheur S."/>
            <person name="Nykamp K.R."/>
            <person name="Viphakone N."/>
            <person name="Swanson M.S."/>
            <person name="Minvielle-Sebastia L."/>
        </authorList>
    </citation>
    <scope>FUNCTION</scope>
    <scope>SUBCELLULAR LOCATION</scope>
</reference>
<reference key="17">
    <citation type="journal article" date="2006" name="RNA">
        <title>Translation-independent inhibition of mRNA deadenylation during stress in Saccharomyces cerevisiae.</title>
        <authorList>
            <person name="Hilgers V."/>
            <person name="Teixeira D."/>
            <person name="Parker R."/>
        </authorList>
    </citation>
    <scope>ACTIVITY REGULATION</scope>
</reference>
<reference key="18">
    <citation type="journal article" date="2014" name="EMBO J.">
        <title>Structural basis for Pan3 binding to Pan2 and its function in mRNA recruitment and deadenylation.</title>
        <authorList>
            <person name="Wolf J."/>
            <person name="Valkov E."/>
            <person name="Allen M.D."/>
            <person name="Meineke B."/>
            <person name="Gordiyenko Y."/>
            <person name="McLaughlin S.H."/>
            <person name="Olsen T.M."/>
            <person name="Robinson C.V."/>
            <person name="Bycroft M."/>
            <person name="Stewart M."/>
            <person name="Passmore L.A."/>
        </authorList>
    </citation>
    <scope>FUNCTION</scope>
    <scope>SUBUNIT</scope>
    <scope>MUTAGENESIS OF GLU-912</scope>
</reference>
<reference key="19">
    <citation type="journal article" date="2014" name="Nat. Struct. Mol. Biol.">
        <title>The structure of the Pan2-Pan3 core complex reveals cross-talk between deadenylase and pseudokinase.</title>
        <authorList>
            <person name="Schaefer I.B."/>
            <person name="Rode M."/>
            <person name="Bonneau F."/>
            <person name="Schuessler S."/>
            <person name="Conti E."/>
        </authorList>
    </citation>
    <scope>X-RAY CRYSTALLOGRAPHY (2.10 ANGSTROMS) OF 340-1115 IN COMPLEX WITH PAN3</scope>
    <scope>FUNCTION</scope>
    <scope>CATALYTIC ACTIVITY</scope>
    <scope>COFACTOR</scope>
    <scope>MUTAGENESIS OF ASP-1020</scope>
</reference>
<gene>
    <name evidence="2" type="primary">PAN2</name>
    <name type="ordered locus">YGL094C</name>
</gene>
<sequence length="1115" mass="127039">MNNWQHFFNNPVDLSEHLKKPYFRFDNRDKEITAISFDEKANLIWSGDSYGCISSYDPTFQLYTRYRGHIGGNSVKDILSHRDGILSISEDSLHFANRRGVTKLNLTSIDIAAFSELNTMCYSPHSLKNNIYCGGDNTNWGIASIDLNRGCLDSLLNYSSKVKLMCSNNKVLSIGRQTGTVDLLDPTSNRTIKSFNAHSASISAMDLRDNTLVTVGKSKRFYNLYADPFVNVYDLRTMRQLPPVSFSKGTTMGSGGADFVQLHPLLPTVMIVASSSGSFDFIDLSNPTLRTQYVHPCQSIKKLCLSPNGDVLGILEADNHLDTWRRSSNNMGMFTNTPEMLAYPDYFNDITSDGPISVDDETYPLSSVGMPYYLDKLLSAWPPVVFKSEGTIPQLTGKSPLPSSGKLKSNLAVISSQNEKLSTQEFPLLRYDRTKYGMRNAIPDYVCLRDIRKQITSGLETSDIQTYTSINKYEVPPAYSRLPLTSGRFGTDNFDFTPFNNTEYSGLDPDVDNHYTNAIIQLYRFIPEMFNFVVGCLKDENFETTLLTDLGYLFDMMERSHGKICSSSNFQASLKSLTDKRQLENGEPQEHLEEYLESLCIRESIEDFNSSESIKRNMPQKFNRFLLSQLIKEEAQTVNHNITLNQCFGLETEIRTECSCDHYDTTVKLLPSLSISGINKTVIKQLNKKSNGQNILPYIEYAMKNVTQKNSICPTCGKTETITQECTVKNLPSVLSLELSLLDTEFSNIRSSKNWLTSEFYGSIIKNKAVLRSTASELKGTSHIFKYELNGYVAKITDNNNETRLVTYVKKYNPKENCFKWLMFNDYLVVEITEEEALKMTYPWKTPEIIIYCDAEELRKPFFSVDTYSINYDILFRDYFANGIRDTARREYKLLTHDEAPKSGTLVAIDAEFVSLQSELCEIDHQGIRSIIRPKRTALARISIIRGEEGELYGVPFVDDYVVNTNHIEDYLTRYSGILPGDLDPEKSTKRLVRRNVVYRKVWLLMQLGCVFVGHGLNNDFKHININVPRNQIRDTAIYFLQGKRYLSLRYLAYVLLGMNIQEGNHDSIEDAHTALILYKKYLHLKEKAIFEKVLNSVYEEGRAHNFKVPETSKG</sequence>
<name>PAN2_YEAST</name>
<comment type="function">
    <text evidence="2 3 4 5 10 11 14 15 16 17">Catalytic subunit of the poly(A)-nuclease (PAN) deadenylation complex, one of two cytoplasmic mRNA deadenylases involved in mRNA turnover. PAN specifically shortens poly(A) tails of RNA and the activity is stimulated by poly(A)-binding protein PAB1. PAN deadenylation is followed by rapid degradation of the shortened mRNA tails by the CCR4-NOT complex. Deadenylated mRNAs are then degraded by two alternative mechanisms, namely exosome-mediated 3'-5' exonucleolytic degradation, or deadenylation-dependent mRNA decaping by DCP1-DCP2 and subsequent 5'-3' exonucleolytic degradation by XRN1. May also be involved in post-transcriptional maturation of mRNA poly(A) tails, trimming the tails from their synthesized length to the slightly shorter, apparently messenger-specific length found on newly exported mRNAs. PAN cooperates with protein kinase DUN1 in the regulation of RAD5 mRNA levels and cell survival in response to replicational stress.</text>
</comment>
<comment type="catalytic activity">
    <reaction evidence="2 5 14">
        <text>Exonucleolytic cleavage of poly(A) to 5'-AMP.</text>
        <dbReference type="EC" id="3.1.13.4"/>
    </reaction>
</comment>
<comment type="cofactor">
    <cofactor evidence="2 14">
        <name>a divalent metal cation</name>
        <dbReference type="ChEBI" id="CHEBI:60240"/>
    </cofactor>
    <text evidence="2 14">Binds 2 metal cations per subunit in the catalytic exonuclease domain.</text>
</comment>
<comment type="activity regulation">
    <text evidence="2 8 12 16">Positively regulated by the regulatory subunit PAN3. Negatively regulated by PAB1-binding protein PBP1. Inhibited under stress conditions. Inhibition of deadenylation under stress increases mRNA stability, which may be a mechanism to retain the majority of the cytoplasmic pool of mRNAs for later reuse and recovery from stress.</text>
</comment>
<comment type="subunit">
    <text evidence="2 9 13 14 16">Forms a heterotrimer with an asymmetric homodimer of the regulatory subunit PAN3 to form the poly(A)-nuclease (PAN) deadenylation complex.</text>
</comment>
<comment type="interaction">
    <interactant intactId="EBI-12887">
        <id>P53010</id>
    </interactant>
    <interactant intactId="EBI-12895">
        <id>P36102</id>
        <label>PAN3</label>
    </interactant>
    <organismsDiffer>false</organismsDiffer>
    <experiments>10</experiments>
</comment>
<comment type="subcellular location">
    <subcellularLocation>
        <location evidence="2 6 11">Cytoplasm</location>
    </subcellularLocation>
</comment>
<comment type="domain">
    <text evidence="2 14">Contains a pseudo-UCH domain. This ubiquitin C-terminal hydrolase (UCH)-like or ubiquitin specific protease (USP)-like domain is predicted to be catalytically inactive because it lacks the active site catalytic triad characteristic of thiol proteases, with residues at the equivalent structural positions that are incompatible with catalysis, and it cannot bind ubiquitin. It functions as a structural scaffold for intra- and intermolecular interactions in the complex.</text>
</comment>
<comment type="domain">
    <text evidence="2 13">The linker, or PAN3 interaction domain (PID), between the WD40 repeats and the pseudo-UCH domain mediates interaction with PAN3.</text>
</comment>
<comment type="miscellaneous">
    <text evidence="7">Present with 1510 molecules/cell in log phase SD medium.</text>
</comment>
<comment type="similarity">
    <text evidence="2">Belongs to the peptidase C19 family. PAN2 subfamily.</text>
</comment>
<proteinExistence type="evidence at protein level"/>
<dbReference type="EC" id="3.1.13.4" evidence="2"/>
<dbReference type="EMBL" id="U39204">
    <property type="protein sequence ID" value="AAC49152.1"/>
    <property type="molecule type" value="Genomic_DNA"/>
</dbReference>
<dbReference type="EMBL" id="Z72616">
    <property type="protein sequence ID" value="CAA96800.1"/>
    <property type="molecule type" value="Genomic_DNA"/>
</dbReference>
<dbReference type="EMBL" id="BK006941">
    <property type="protein sequence ID" value="DAA08012.1"/>
    <property type="molecule type" value="Genomic_DNA"/>
</dbReference>
<dbReference type="PIR" id="S64101">
    <property type="entry name" value="S64101"/>
</dbReference>
<dbReference type="RefSeq" id="NP_011421.1">
    <property type="nucleotide sequence ID" value="NM_001180959.1"/>
</dbReference>
<dbReference type="PDB" id="4Q8G">
    <property type="method" value="X-ray"/>
    <property type="resolution" value="2.10 A"/>
    <property type="chains" value="A/B=416-870"/>
</dbReference>
<dbReference type="PDB" id="4Q8H">
    <property type="method" value="X-ray"/>
    <property type="resolution" value="3.10 A"/>
    <property type="chains" value="A=460-1115"/>
</dbReference>
<dbReference type="PDB" id="4XR7">
    <property type="method" value="X-ray"/>
    <property type="resolution" value="3.80 A"/>
    <property type="chains" value="A/D/G/J=340-1115"/>
</dbReference>
<dbReference type="PDB" id="6R5K">
    <property type="method" value="EM"/>
    <property type="resolution" value="4.80 A"/>
    <property type="chains" value="A=1-1115"/>
</dbReference>
<dbReference type="PDB" id="6R9I">
    <property type="method" value="X-ray"/>
    <property type="resolution" value="3.00 A"/>
    <property type="chains" value="A=461-1115"/>
</dbReference>
<dbReference type="PDB" id="6R9J">
    <property type="method" value="X-ray"/>
    <property type="resolution" value="3.33 A"/>
    <property type="chains" value="A=461-1115"/>
</dbReference>
<dbReference type="PDB" id="6R9M">
    <property type="method" value="X-ray"/>
    <property type="resolution" value="3.33 A"/>
    <property type="chains" value="A=461-1115"/>
</dbReference>
<dbReference type="PDB" id="6R9O">
    <property type="method" value="X-ray"/>
    <property type="resolution" value="3.32 A"/>
    <property type="chains" value="A=461-1115"/>
</dbReference>
<dbReference type="PDB" id="6R9P">
    <property type="method" value="X-ray"/>
    <property type="resolution" value="2.98 A"/>
    <property type="chains" value="A=461-1115"/>
</dbReference>
<dbReference type="PDB" id="6R9Q">
    <property type="method" value="X-ray"/>
    <property type="resolution" value="3.08 A"/>
    <property type="chains" value="A=461-1115"/>
</dbReference>
<dbReference type="PDBsum" id="4Q8G"/>
<dbReference type="PDBsum" id="4Q8H"/>
<dbReference type="PDBsum" id="4XR7"/>
<dbReference type="PDBsum" id="6R5K"/>
<dbReference type="PDBsum" id="6R9I"/>
<dbReference type="PDBsum" id="6R9J"/>
<dbReference type="PDBsum" id="6R9M"/>
<dbReference type="PDBsum" id="6R9O"/>
<dbReference type="PDBsum" id="6R9P"/>
<dbReference type="PDBsum" id="6R9Q"/>
<dbReference type="EMDB" id="EMD-4728"/>
<dbReference type="SMR" id="P53010"/>
<dbReference type="BioGRID" id="33157">
    <property type="interactions" value="190"/>
</dbReference>
<dbReference type="ComplexPortal" id="CPX-3294">
    <property type="entry name" value="PAN2-PAN3 mRNA deadenylation complex"/>
</dbReference>
<dbReference type="DIP" id="DIP-2466N"/>
<dbReference type="FunCoup" id="P53010">
    <property type="interactions" value="847"/>
</dbReference>
<dbReference type="IntAct" id="P53010">
    <property type="interactions" value="61"/>
</dbReference>
<dbReference type="MINT" id="P53010"/>
<dbReference type="STRING" id="4932.YGL094C"/>
<dbReference type="GlyGen" id="P53010">
    <property type="glycosylation" value="4 sites, 1 O-linked glycan (3 sites)"/>
</dbReference>
<dbReference type="iPTMnet" id="P53010"/>
<dbReference type="PaxDb" id="4932-YGL094C"/>
<dbReference type="PeptideAtlas" id="P53010"/>
<dbReference type="EnsemblFungi" id="YGL094C_mRNA">
    <property type="protein sequence ID" value="YGL094C"/>
    <property type="gene ID" value="YGL094C"/>
</dbReference>
<dbReference type="GeneID" id="852786"/>
<dbReference type="KEGG" id="sce:YGL094C"/>
<dbReference type="AGR" id="SGD:S000003062"/>
<dbReference type="SGD" id="S000003062">
    <property type="gene designation" value="PAN2"/>
</dbReference>
<dbReference type="VEuPathDB" id="FungiDB:YGL094C"/>
<dbReference type="eggNOG" id="KOG1275">
    <property type="taxonomic scope" value="Eukaryota"/>
</dbReference>
<dbReference type="GeneTree" id="ENSGT00390000013978"/>
<dbReference type="HOGENOM" id="CLU_002369_1_0_1"/>
<dbReference type="InParanoid" id="P53010"/>
<dbReference type="OMA" id="TQELLWT"/>
<dbReference type="OrthoDB" id="16516at2759"/>
<dbReference type="BioCyc" id="YEAST:G3O-30594-MONOMER"/>
<dbReference type="Reactome" id="R-SCE-429947">
    <property type="pathway name" value="Deadenylation of mRNA"/>
</dbReference>
<dbReference type="BioGRID-ORCS" id="852786">
    <property type="hits" value="0 hits in 10 CRISPR screens"/>
</dbReference>
<dbReference type="CD-CODE" id="67785C55">
    <property type="entry name" value="Hypersomatic shock foci"/>
</dbReference>
<dbReference type="EvolutionaryTrace" id="P53010"/>
<dbReference type="PRO" id="PR:P53010"/>
<dbReference type="Proteomes" id="UP000002311">
    <property type="component" value="Chromosome VII"/>
</dbReference>
<dbReference type="RNAct" id="P53010">
    <property type="molecule type" value="protein"/>
</dbReference>
<dbReference type="GO" id="GO:0005737">
    <property type="term" value="C:cytoplasm"/>
    <property type="evidence" value="ECO:0007005"/>
    <property type="project" value="SGD"/>
</dbReference>
<dbReference type="GO" id="GO:0000932">
    <property type="term" value="C:P-body"/>
    <property type="evidence" value="ECO:0000318"/>
    <property type="project" value="GO_Central"/>
</dbReference>
<dbReference type="GO" id="GO:0031251">
    <property type="term" value="C:PAN complex"/>
    <property type="evidence" value="ECO:0000314"/>
    <property type="project" value="SGD"/>
</dbReference>
<dbReference type="GO" id="GO:0046872">
    <property type="term" value="F:metal ion binding"/>
    <property type="evidence" value="ECO:0007669"/>
    <property type="project" value="UniProtKB-KW"/>
</dbReference>
<dbReference type="GO" id="GO:0003676">
    <property type="term" value="F:nucleic acid binding"/>
    <property type="evidence" value="ECO:0007669"/>
    <property type="project" value="InterPro"/>
</dbReference>
<dbReference type="GO" id="GO:0004535">
    <property type="term" value="F:poly(A)-specific ribonuclease activity"/>
    <property type="evidence" value="ECO:0007669"/>
    <property type="project" value="UniProtKB-UniRule"/>
</dbReference>
<dbReference type="GO" id="GO:0006397">
    <property type="term" value="P:mRNA processing"/>
    <property type="evidence" value="ECO:0007669"/>
    <property type="project" value="UniProtKB-KW"/>
</dbReference>
<dbReference type="GO" id="GO:0000289">
    <property type="term" value="P:nuclear-transcribed mRNA poly(A) tail shortening"/>
    <property type="evidence" value="ECO:0000314"/>
    <property type="project" value="ComplexPortal"/>
</dbReference>
<dbReference type="GO" id="GO:0006301">
    <property type="term" value="P:postreplication repair"/>
    <property type="evidence" value="ECO:0000316"/>
    <property type="project" value="SGD"/>
</dbReference>
<dbReference type="CDD" id="cd06143">
    <property type="entry name" value="PAN2_exo"/>
    <property type="match status" value="1"/>
</dbReference>
<dbReference type="FunFam" id="2.130.10.10:FF:000943">
    <property type="entry name" value="PAN2-PAN3 deadenylation complex catalytic subunit PAN2"/>
    <property type="match status" value="1"/>
</dbReference>
<dbReference type="FunFam" id="3.30.420.10:FF:000028">
    <property type="entry name" value="PAN2-PAN3 deadenylation complex catalytic subunit PAN2"/>
    <property type="match status" value="1"/>
</dbReference>
<dbReference type="FunFam" id="3.90.70.10:FF:000168">
    <property type="entry name" value="PAN2-PAN3 deadenylation complex catalytic subunit PAN2"/>
    <property type="match status" value="1"/>
</dbReference>
<dbReference type="Gene3D" id="3.90.70.10">
    <property type="entry name" value="Cysteine proteinases"/>
    <property type="match status" value="1"/>
</dbReference>
<dbReference type="Gene3D" id="3.30.420.10">
    <property type="entry name" value="Ribonuclease H-like superfamily/Ribonuclease H"/>
    <property type="match status" value="1"/>
</dbReference>
<dbReference type="Gene3D" id="2.130.10.10">
    <property type="entry name" value="YVTN repeat-like/Quinoprotein amine dehydrogenase"/>
    <property type="match status" value="1"/>
</dbReference>
<dbReference type="HAMAP" id="MF_03182">
    <property type="entry name" value="PAN2"/>
    <property type="match status" value="1"/>
</dbReference>
<dbReference type="InterPro" id="IPR013520">
    <property type="entry name" value="Exonuclease_RNaseT/DNA_pol3"/>
</dbReference>
<dbReference type="InterPro" id="IPR030843">
    <property type="entry name" value="PAN2"/>
</dbReference>
<dbReference type="InterPro" id="IPR050785">
    <property type="entry name" value="PAN2-PAN3_catalytic_subunit"/>
</dbReference>
<dbReference type="InterPro" id="IPR048841">
    <property type="entry name" value="PAN2_N"/>
</dbReference>
<dbReference type="InterPro" id="IPR028881">
    <property type="entry name" value="PAN2_UCH_dom"/>
</dbReference>
<dbReference type="InterPro" id="IPR038765">
    <property type="entry name" value="Papain-like_cys_pep_sf"/>
</dbReference>
<dbReference type="InterPro" id="IPR011047">
    <property type="entry name" value="Quinoprotein_ADH-like_sf"/>
</dbReference>
<dbReference type="InterPro" id="IPR012337">
    <property type="entry name" value="RNaseH-like_sf"/>
</dbReference>
<dbReference type="InterPro" id="IPR036397">
    <property type="entry name" value="RNaseH_sf"/>
</dbReference>
<dbReference type="InterPro" id="IPR028889">
    <property type="entry name" value="USP_dom"/>
</dbReference>
<dbReference type="InterPro" id="IPR015943">
    <property type="entry name" value="WD40/YVTN_repeat-like_dom_sf"/>
</dbReference>
<dbReference type="PANTHER" id="PTHR15728">
    <property type="entry name" value="DEADENYLATION COMPLEX CATALYTIC SUBUNIT PAN2"/>
    <property type="match status" value="1"/>
</dbReference>
<dbReference type="PANTHER" id="PTHR15728:SF0">
    <property type="entry name" value="PAN2-PAN3 DEADENYLATION COMPLEX CATALYTIC SUBUNIT PAN2"/>
    <property type="match status" value="1"/>
</dbReference>
<dbReference type="Pfam" id="PF20770">
    <property type="entry name" value="PAN2_N"/>
    <property type="match status" value="1"/>
</dbReference>
<dbReference type="Pfam" id="PF00929">
    <property type="entry name" value="RNase_T"/>
    <property type="match status" value="1"/>
</dbReference>
<dbReference type="Pfam" id="PF13423">
    <property type="entry name" value="UCH_1"/>
    <property type="match status" value="1"/>
</dbReference>
<dbReference type="SMART" id="SM00479">
    <property type="entry name" value="EXOIII"/>
    <property type="match status" value="1"/>
</dbReference>
<dbReference type="SUPFAM" id="SSF54001">
    <property type="entry name" value="Cysteine proteinases"/>
    <property type="match status" value="1"/>
</dbReference>
<dbReference type="SUPFAM" id="SSF50998">
    <property type="entry name" value="Quinoprotein alcohol dehydrogenase-like"/>
    <property type="match status" value="1"/>
</dbReference>
<dbReference type="SUPFAM" id="SSF53098">
    <property type="entry name" value="Ribonuclease H-like"/>
    <property type="match status" value="1"/>
</dbReference>
<dbReference type="PROSITE" id="PS50235">
    <property type="entry name" value="USP_3"/>
    <property type="match status" value="1"/>
</dbReference>
<evidence type="ECO:0000250" key="1">
    <source>
        <dbReference type="UniProtKB" id="O95453"/>
    </source>
</evidence>
<evidence type="ECO:0000255" key="2">
    <source>
        <dbReference type="HAMAP-Rule" id="MF_03182"/>
    </source>
</evidence>
<evidence type="ECO:0000269" key="3">
    <source>
    </source>
</evidence>
<evidence type="ECO:0000269" key="4">
    <source>
    </source>
</evidence>
<evidence type="ECO:0000269" key="5">
    <source>
    </source>
</evidence>
<evidence type="ECO:0000269" key="6">
    <source>
    </source>
</evidence>
<evidence type="ECO:0000269" key="7">
    <source>
    </source>
</evidence>
<evidence type="ECO:0000269" key="8">
    <source>
    </source>
</evidence>
<evidence type="ECO:0000269" key="9">
    <source>
    </source>
</evidence>
<evidence type="ECO:0000269" key="10">
    <source>
    </source>
</evidence>
<evidence type="ECO:0000269" key="11">
    <source>
    </source>
</evidence>
<evidence type="ECO:0000269" key="12">
    <source>
    </source>
</evidence>
<evidence type="ECO:0000269" key="13">
    <source>
    </source>
</evidence>
<evidence type="ECO:0000269" key="14">
    <source>
    </source>
</evidence>
<evidence type="ECO:0000269" key="15">
    <source>
    </source>
</evidence>
<evidence type="ECO:0000269" key="16">
    <source>
    </source>
</evidence>
<evidence type="ECO:0000269" key="17">
    <source>
    </source>
</evidence>
<evidence type="ECO:0000305" key="18"/>
<evidence type="ECO:0000305" key="19">
    <source>
    </source>
</evidence>
<evidence type="ECO:0007744" key="20">
    <source>
        <dbReference type="PDB" id="4Q8G"/>
    </source>
</evidence>
<evidence type="ECO:0007829" key="21">
    <source>
        <dbReference type="PDB" id="4Q8G"/>
    </source>
</evidence>
<evidence type="ECO:0007829" key="22">
    <source>
        <dbReference type="PDB" id="4Q8H"/>
    </source>
</evidence>
<evidence type="ECO:0007829" key="23">
    <source>
        <dbReference type="PDB" id="6R9I"/>
    </source>
</evidence>
<evidence type="ECO:0007829" key="24">
    <source>
        <dbReference type="PDB" id="6R9J"/>
    </source>
</evidence>
<evidence type="ECO:0007829" key="25">
    <source>
        <dbReference type="PDB" id="6R9O"/>
    </source>
</evidence>
<evidence type="ECO:0007829" key="26">
    <source>
        <dbReference type="PDB" id="6R9P"/>
    </source>
</evidence>
<evidence type="ECO:0007829" key="27">
    <source>
        <dbReference type="PDB" id="6R9Q"/>
    </source>
</evidence>
<protein>
    <recommendedName>
        <fullName evidence="2 18">PAN2-PAN3 deadenylation complex catalytic subunit PAN2</fullName>
        <ecNumber evidence="2">3.1.13.4</ecNumber>
    </recommendedName>
    <alternativeName>
        <fullName evidence="2">PAB1P-dependent poly(A)-specific ribonuclease</fullName>
    </alternativeName>
    <alternativeName>
        <fullName evidence="2">Poly(A)-nuclease deadenylation complex subunit 2</fullName>
        <shortName evidence="2">PAN deadenylation complex subunit 2</shortName>
    </alternativeName>
</protein>
<organism>
    <name type="scientific">Saccharomyces cerevisiae (strain ATCC 204508 / S288c)</name>
    <name type="common">Baker's yeast</name>
    <dbReference type="NCBI Taxonomy" id="559292"/>
    <lineage>
        <taxon>Eukaryota</taxon>
        <taxon>Fungi</taxon>
        <taxon>Dikarya</taxon>
        <taxon>Ascomycota</taxon>
        <taxon>Saccharomycotina</taxon>
        <taxon>Saccharomycetes</taxon>
        <taxon>Saccharomycetales</taxon>
        <taxon>Saccharomycetaceae</taxon>
        <taxon>Saccharomyces</taxon>
    </lineage>
</organism>